<dbReference type="EC" id="3.5.1.1"/>
<dbReference type="EMBL" id="M26934">
    <property type="protein sequence ID" value="AAA23446.1"/>
    <property type="status" value="ALT_INIT"/>
    <property type="molecule type" value="Genomic_DNA"/>
</dbReference>
<dbReference type="EMBL" id="U00096">
    <property type="protein sequence ID" value="AAC74837.1"/>
    <property type="molecule type" value="Genomic_DNA"/>
</dbReference>
<dbReference type="EMBL" id="AP009048">
    <property type="protein sequence ID" value="BAA15558.1"/>
    <property type="molecule type" value="Genomic_DNA"/>
</dbReference>
<dbReference type="PIR" id="G64936">
    <property type="entry name" value="XDEC1"/>
</dbReference>
<dbReference type="RefSeq" id="NP_416281.1">
    <property type="nucleotide sequence ID" value="NC_000913.3"/>
</dbReference>
<dbReference type="RefSeq" id="WP_001170162.1">
    <property type="nucleotide sequence ID" value="NZ_STEB01000009.1"/>
</dbReference>
<dbReference type="PDB" id="2HIM">
    <property type="method" value="X-ray"/>
    <property type="resolution" value="1.82 A"/>
    <property type="chains" value="A/B/C/D=1-338"/>
</dbReference>
<dbReference type="PDB" id="2P2D">
    <property type="method" value="X-ray"/>
    <property type="resolution" value="1.89 A"/>
    <property type="chains" value="A/B/C/D=1-338"/>
</dbReference>
<dbReference type="PDB" id="2P2N">
    <property type="method" value="X-ray"/>
    <property type="resolution" value="1.90 A"/>
    <property type="chains" value="A/B/C/D=1-338"/>
</dbReference>
<dbReference type="PDB" id="6NXC">
    <property type="method" value="X-ray"/>
    <property type="resolution" value="1.74 A"/>
    <property type="chains" value="A/B/C/D=1-337"/>
</dbReference>
<dbReference type="PDB" id="6NXD">
    <property type="method" value="X-ray"/>
    <property type="resolution" value="1.90 A"/>
    <property type="chains" value="A/B/C/D=1-338"/>
</dbReference>
<dbReference type="PDBsum" id="2HIM"/>
<dbReference type="PDBsum" id="2P2D"/>
<dbReference type="PDBsum" id="2P2N"/>
<dbReference type="PDBsum" id="6NXC"/>
<dbReference type="PDBsum" id="6NXD"/>
<dbReference type="SMR" id="P0A962"/>
<dbReference type="BioGRID" id="4259141">
    <property type="interactions" value="22"/>
</dbReference>
<dbReference type="BioGRID" id="850636">
    <property type="interactions" value="1"/>
</dbReference>
<dbReference type="DIP" id="DIP-9109N"/>
<dbReference type="FunCoup" id="P0A962">
    <property type="interactions" value="489"/>
</dbReference>
<dbReference type="IntAct" id="P0A962">
    <property type="interactions" value="6"/>
</dbReference>
<dbReference type="STRING" id="511145.b1767"/>
<dbReference type="jPOST" id="P0A962"/>
<dbReference type="PaxDb" id="511145-b1767"/>
<dbReference type="EnsemblBacteria" id="AAC74837">
    <property type="protein sequence ID" value="AAC74837"/>
    <property type="gene ID" value="b1767"/>
</dbReference>
<dbReference type="GeneID" id="93775984"/>
<dbReference type="GeneID" id="946278"/>
<dbReference type="KEGG" id="ecj:JW1756"/>
<dbReference type="KEGG" id="eco:b1767"/>
<dbReference type="KEGG" id="ecoc:C3026_10090"/>
<dbReference type="PATRIC" id="fig|1411691.4.peg.487"/>
<dbReference type="EchoBASE" id="EB0043"/>
<dbReference type="eggNOG" id="COG0252">
    <property type="taxonomic scope" value="Bacteria"/>
</dbReference>
<dbReference type="HOGENOM" id="CLU_019134_2_3_6"/>
<dbReference type="InParanoid" id="P0A962"/>
<dbReference type="OMA" id="CEDMLPE"/>
<dbReference type="OrthoDB" id="9788068at2"/>
<dbReference type="PhylomeDB" id="P0A962"/>
<dbReference type="BioCyc" id="EcoCyc:ANSA-MONOMER"/>
<dbReference type="BioCyc" id="MetaCyc:ANSA-MONOMER"/>
<dbReference type="EvolutionaryTrace" id="P0A962"/>
<dbReference type="PRO" id="PR:P0A962"/>
<dbReference type="Proteomes" id="UP000000625">
    <property type="component" value="Chromosome"/>
</dbReference>
<dbReference type="GO" id="GO:0005737">
    <property type="term" value="C:cytoplasm"/>
    <property type="evidence" value="ECO:0000314"/>
    <property type="project" value="EcoCyc"/>
</dbReference>
<dbReference type="GO" id="GO:0005829">
    <property type="term" value="C:cytosol"/>
    <property type="evidence" value="ECO:0000314"/>
    <property type="project" value="EcoCyc"/>
</dbReference>
<dbReference type="GO" id="GO:0004067">
    <property type="term" value="F:asparaginase activity"/>
    <property type="evidence" value="ECO:0000314"/>
    <property type="project" value="EcoCyc"/>
</dbReference>
<dbReference type="GO" id="GO:0042802">
    <property type="term" value="F:identical protein binding"/>
    <property type="evidence" value="ECO:0000314"/>
    <property type="project" value="EcoCyc"/>
</dbReference>
<dbReference type="GO" id="GO:0033345">
    <property type="term" value="P:asparagine catabolic process via L-aspartate"/>
    <property type="evidence" value="ECO:0000315"/>
    <property type="project" value="EcoCyc"/>
</dbReference>
<dbReference type="GO" id="GO:0051289">
    <property type="term" value="P:protein homotetramerization"/>
    <property type="evidence" value="ECO:0000314"/>
    <property type="project" value="EcoCyc"/>
</dbReference>
<dbReference type="CDD" id="cd08963">
    <property type="entry name" value="L-asparaginase_I"/>
    <property type="match status" value="1"/>
</dbReference>
<dbReference type="FunFam" id="3.40.50.1170:FF:000002">
    <property type="entry name" value="L-asparaginase 1"/>
    <property type="match status" value="1"/>
</dbReference>
<dbReference type="FunFam" id="3.40.50.40:FF:000001">
    <property type="entry name" value="L-asparaginase 1"/>
    <property type="match status" value="1"/>
</dbReference>
<dbReference type="Gene3D" id="3.40.50.40">
    <property type="match status" value="1"/>
</dbReference>
<dbReference type="Gene3D" id="3.40.50.1170">
    <property type="entry name" value="L-asparaginase, N-terminal domain"/>
    <property type="match status" value="1"/>
</dbReference>
<dbReference type="InterPro" id="IPR006033">
    <property type="entry name" value="AsnA_fam"/>
</dbReference>
<dbReference type="InterPro" id="IPR036152">
    <property type="entry name" value="Asp/glu_Ase-like_sf"/>
</dbReference>
<dbReference type="InterPro" id="IPR006034">
    <property type="entry name" value="Asparaginase/glutaminase-like"/>
</dbReference>
<dbReference type="InterPro" id="IPR020827">
    <property type="entry name" value="Asparaginase/glutaminase_AS1"/>
</dbReference>
<dbReference type="InterPro" id="IPR027475">
    <property type="entry name" value="Asparaginase/glutaminase_AS2"/>
</dbReference>
<dbReference type="InterPro" id="IPR040919">
    <property type="entry name" value="Asparaginase_C"/>
</dbReference>
<dbReference type="InterPro" id="IPR027473">
    <property type="entry name" value="L-asparaginase_C"/>
</dbReference>
<dbReference type="InterPro" id="IPR041725">
    <property type="entry name" value="L-asparaginase_I"/>
</dbReference>
<dbReference type="InterPro" id="IPR027474">
    <property type="entry name" value="L-asparaginase_N"/>
</dbReference>
<dbReference type="InterPro" id="IPR037152">
    <property type="entry name" value="L-asparaginase_N_sf"/>
</dbReference>
<dbReference type="NCBIfam" id="TIGR00519">
    <property type="entry name" value="asnASE_I"/>
    <property type="match status" value="1"/>
</dbReference>
<dbReference type="NCBIfam" id="NF006998">
    <property type="entry name" value="PRK09461.1"/>
    <property type="match status" value="1"/>
</dbReference>
<dbReference type="PANTHER" id="PTHR11707:SF28">
    <property type="entry name" value="60 KDA LYSOPHOSPHOLIPASE"/>
    <property type="match status" value="1"/>
</dbReference>
<dbReference type="PANTHER" id="PTHR11707">
    <property type="entry name" value="L-ASPARAGINASE"/>
    <property type="match status" value="1"/>
</dbReference>
<dbReference type="Pfam" id="PF00710">
    <property type="entry name" value="Asparaginase"/>
    <property type="match status" value="1"/>
</dbReference>
<dbReference type="Pfam" id="PF17763">
    <property type="entry name" value="Asparaginase_C"/>
    <property type="match status" value="1"/>
</dbReference>
<dbReference type="PIRSF" id="PIRSF001220">
    <property type="entry name" value="L-ASNase_gatD"/>
    <property type="match status" value="1"/>
</dbReference>
<dbReference type="PIRSF" id="PIRSF500176">
    <property type="entry name" value="L_ASNase"/>
    <property type="match status" value="1"/>
</dbReference>
<dbReference type="PRINTS" id="PR00139">
    <property type="entry name" value="ASNGLNASE"/>
</dbReference>
<dbReference type="SFLD" id="SFLDS00057">
    <property type="entry name" value="Glutaminase/Asparaginase"/>
    <property type="match status" value="1"/>
</dbReference>
<dbReference type="SMART" id="SM00870">
    <property type="entry name" value="Asparaginase"/>
    <property type="match status" value="1"/>
</dbReference>
<dbReference type="SUPFAM" id="SSF53774">
    <property type="entry name" value="Glutaminase/Asparaginase"/>
    <property type="match status" value="1"/>
</dbReference>
<dbReference type="PROSITE" id="PS00144">
    <property type="entry name" value="ASN_GLN_ASE_1"/>
    <property type="match status" value="1"/>
</dbReference>
<dbReference type="PROSITE" id="PS00917">
    <property type="entry name" value="ASN_GLN_ASE_2"/>
    <property type="match status" value="1"/>
</dbReference>
<dbReference type="PROSITE" id="PS51732">
    <property type="entry name" value="ASN_GLN_ASE_3"/>
    <property type="match status" value="1"/>
</dbReference>
<organism>
    <name type="scientific">Escherichia coli (strain K12)</name>
    <dbReference type="NCBI Taxonomy" id="83333"/>
    <lineage>
        <taxon>Bacteria</taxon>
        <taxon>Pseudomonadati</taxon>
        <taxon>Pseudomonadota</taxon>
        <taxon>Gammaproteobacteria</taxon>
        <taxon>Enterobacterales</taxon>
        <taxon>Enterobacteriaceae</taxon>
        <taxon>Escherichia</taxon>
    </lineage>
</organism>
<sequence>MQKKSIYVAYTGGTIGMQRSEQGYIPVSGHLQRQLALMPEFHRPEMPDFTIHEYTPLMDSSDMTPEDWQHIAEDIKAHYDDYDGFVILHGTDTMAYTASALSFMLENLGKPVIVTGSQIPLAELRSDGQINLLNALYVAANYPINEVTLFFNNRLYRGNRTTKAHADGFDAFASPNLPPLLEAGIHIRRLNTPPAPHGEGELIVHPITPQPIGVVTIYPGISADVVRNFLRQPVKALILRSYGVGNAPQNKAFLQELQEASDRGIVVVNLTQCMSGKVNMGGYATGNALAHAGVIGGADMTVEATLTKLHYLLSQELDTETIRKAMSQNLRGELTPDD</sequence>
<keyword id="KW-0002">3D-structure</keyword>
<keyword id="KW-0021">Allosteric enzyme</keyword>
<keyword id="KW-0963">Cytoplasm</keyword>
<keyword id="KW-0378">Hydrolase</keyword>
<keyword id="KW-1185">Reference proteome</keyword>
<comment type="catalytic activity">
    <reaction evidence="4">
        <text>L-asparagine + H2O = L-aspartate + NH4(+)</text>
        <dbReference type="Rhea" id="RHEA:21016"/>
        <dbReference type="ChEBI" id="CHEBI:15377"/>
        <dbReference type="ChEBI" id="CHEBI:28938"/>
        <dbReference type="ChEBI" id="CHEBI:29991"/>
        <dbReference type="ChEBI" id="CHEBI:58048"/>
        <dbReference type="EC" id="3.5.1.1"/>
    </reaction>
</comment>
<comment type="activity regulation">
    <text evidence="4">Shows cooperative activation. Allosterically activated by asparagine.</text>
</comment>
<comment type="biophysicochemical properties">
    <kinetics>
        <KM>3.5 mM for L-asparagine</KM>
    </kinetics>
</comment>
<comment type="subunit">
    <text evidence="4">Homotetramer.</text>
</comment>
<comment type="subcellular location">
    <subcellularLocation>
        <location>Cytoplasm</location>
    </subcellularLocation>
</comment>
<comment type="miscellaneous">
    <text>E.coli contains two L-asparaginase isoenzymes: L-asparaginase I, a low-affinity enzyme located in the cytoplasm, and L-asparaginase II, a high-affinity secreted enzyme.</text>
</comment>
<comment type="similarity">
    <text evidence="5">Belongs to the asparaginase 1 family.</text>
</comment>
<comment type="sequence caution" evidence="5">
    <conflict type="erroneous initiation">
        <sequence resource="EMBL-CDS" id="AAA23446"/>
    </conflict>
</comment>
<evidence type="ECO:0000255" key="1">
    <source>
        <dbReference type="PROSITE-ProRule" id="PRU01068"/>
    </source>
</evidence>
<evidence type="ECO:0000255" key="2">
    <source>
        <dbReference type="PROSITE-ProRule" id="PRU10099"/>
    </source>
</evidence>
<evidence type="ECO:0000255" key="3">
    <source>
        <dbReference type="PROSITE-ProRule" id="PRU10100"/>
    </source>
</evidence>
<evidence type="ECO:0000269" key="4">
    <source>
    </source>
</evidence>
<evidence type="ECO:0000305" key="5"/>
<evidence type="ECO:0007744" key="6">
    <source>
        <dbReference type="PDB" id="2HIM"/>
    </source>
</evidence>
<evidence type="ECO:0007744" key="7">
    <source>
        <dbReference type="PDB" id="2P2D"/>
    </source>
</evidence>
<evidence type="ECO:0007744" key="8">
    <source>
        <dbReference type="PDB" id="2P2N"/>
    </source>
</evidence>
<evidence type="ECO:0007829" key="9">
    <source>
        <dbReference type="PDB" id="2P2D"/>
    </source>
</evidence>
<evidence type="ECO:0007829" key="10">
    <source>
        <dbReference type="PDB" id="6NXC"/>
    </source>
</evidence>
<name>ASPG1_ECOLI</name>
<protein>
    <recommendedName>
        <fullName>L-asparaginase 1</fullName>
        <ecNumber>3.5.1.1</ecNumber>
    </recommendedName>
    <alternativeName>
        <fullName>L-asparaginase I</fullName>
        <shortName>L-ASNase I</shortName>
    </alternativeName>
    <alternativeName>
        <fullName>L-asparagine amidohydrolase I</fullName>
    </alternativeName>
</protein>
<feature type="chain" id="PRO_0000171079" description="L-asparaginase 1">
    <location>
        <begin position="1"/>
        <end position="338"/>
    </location>
</feature>
<feature type="domain" description="Asparaginase/glutaminase" evidence="1">
    <location>
        <begin position="4"/>
        <end position="329"/>
    </location>
</feature>
<feature type="active site" description="O-isoaspartyl threonine intermediate" evidence="2 3 4">
    <location>
        <position position="14"/>
    </location>
</feature>
<feature type="binding site" evidence="8">
    <location>
        <begin position="59"/>
        <end position="61"/>
    </location>
    <ligand>
        <name>L-asparagine</name>
        <dbReference type="ChEBI" id="CHEBI:58048"/>
        <label>1</label>
        <note>substrate</note>
    </ligand>
</feature>
<feature type="binding site" evidence="8">
    <location>
        <begin position="91"/>
        <end position="92"/>
    </location>
    <ligand>
        <name>L-asparagine</name>
        <dbReference type="ChEBI" id="CHEBI:58048"/>
        <label>1</label>
        <note>substrate</note>
    </ligand>
</feature>
<feature type="binding site" evidence="8">
    <location>
        <position position="162"/>
    </location>
    <ligand>
        <name>L-asparagine</name>
        <dbReference type="ChEBI" id="CHEBI:58048"/>
        <label>2</label>
        <note>allosteric activator</note>
    </ligand>
</feature>
<feature type="binding site" evidence="8">
    <location>
        <position position="240"/>
    </location>
    <ligand>
        <name>L-asparagine</name>
        <dbReference type="ChEBI" id="CHEBI:58048"/>
        <label>2</label>
        <note>allosteric activator</note>
    </ligand>
</feature>
<feature type="binding site" evidence="8">
    <location>
        <begin position="271"/>
        <end position="273"/>
    </location>
    <ligand>
        <name>L-asparagine</name>
        <dbReference type="ChEBI" id="CHEBI:58048"/>
        <label>2</label>
        <note>allosteric activator</note>
    </ligand>
</feature>
<feature type="mutagenesis site" description="Loss of enzyme activity." evidence="4">
    <original>T</original>
    <variation>A</variation>
    <variation>V</variation>
    <location>
        <position position="14"/>
    </location>
</feature>
<feature type="mutagenesis site" description="Loss of enzyme activity.">
    <original>S</original>
    <variation>Q</variation>
    <location>
        <position position="61"/>
    </location>
</feature>
<feature type="mutagenesis site" description="Loss of enzyme activity." evidence="4">
    <original>T</original>
    <variation>A</variation>
    <variation>V</variation>
    <location>
        <position position="91"/>
    </location>
</feature>
<feature type="mutagenesis site" description="Loss of enzyme activity." evidence="4">
    <original>Q</original>
    <variation>D</variation>
    <location>
        <position position="118"/>
    </location>
</feature>
<feature type="mutagenesis site" description="No effect on activity at saturating substrate concentration. Abolishes cooperativity." evidence="4">
    <original>T</original>
    <variation>A</variation>
    <location>
        <position position="162"/>
    </location>
</feature>
<feature type="mutagenesis site" description="No effect on activity at saturating substrate concentration. Reduced activity at lower substrate concentrations." evidence="4">
    <original>R</original>
    <variation>A</variation>
    <location>
        <position position="240"/>
    </location>
</feature>
<feature type="strand" evidence="10">
    <location>
        <begin position="5"/>
        <end position="13"/>
    </location>
</feature>
<feature type="helix" evidence="10">
    <location>
        <begin position="14"/>
        <end position="16"/>
    </location>
</feature>
<feature type="strand" evidence="9">
    <location>
        <begin position="18"/>
        <end position="20"/>
    </location>
</feature>
<feature type="strand" evidence="9">
    <location>
        <begin position="23"/>
        <end position="25"/>
    </location>
</feature>
<feature type="helix" evidence="10">
    <location>
        <begin position="30"/>
        <end position="36"/>
    </location>
</feature>
<feature type="helix" evidence="10">
    <location>
        <begin position="39"/>
        <end position="42"/>
    </location>
</feature>
<feature type="strand" evidence="10">
    <location>
        <begin position="48"/>
        <end position="58"/>
    </location>
</feature>
<feature type="helix" evidence="10">
    <location>
        <begin position="60"/>
        <end position="62"/>
    </location>
</feature>
<feature type="helix" evidence="10">
    <location>
        <begin position="65"/>
        <end position="78"/>
    </location>
</feature>
<feature type="helix" evidence="10">
    <location>
        <begin position="79"/>
        <end position="81"/>
    </location>
</feature>
<feature type="strand" evidence="10">
    <location>
        <begin position="83"/>
        <end position="88"/>
    </location>
</feature>
<feature type="helix" evidence="10">
    <location>
        <begin position="94"/>
        <end position="104"/>
    </location>
</feature>
<feature type="strand" evidence="9">
    <location>
        <begin position="105"/>
        <end position="107"/>
    </location>
</feature>
<feature type="strand" evidence="10">
    <location>
        <begin position="112"/>
        <end position="115"/>
    </location>
</feature>
<feature type="strand" evidence="9">
    <location>
        <begin position="123"/>
        <end position="125"/>
    </location>
</feature>
<feature type="helix" evidence="10">
    <location>
        <begin position="128"/>
        <end position="141"/>
    </location>
</feature>
<feature type="strand" evidence="10">
    <location>
        <begin position="145"/>
        <end position="151"/>
    </location>
</feature>
<feature type="strand" evidence="10">
    <location>
        <begin position="154"/>
        <end position="157"/>
    </location>
</feature>
<feature type="helix" evidence="10">
    <location>
        <begin position="158"/>
        <end position="160"/>
    </location>
</feature>
<feature type="strand" evidence="9">
    <location>
        <begin position="162"/>
        <end position="165"/>
    </location>
</feature>
<feature type="strand" evidence="10">
    <location>
        <begin position="168"/>
        <end position="170"/>
    </location>
</feature>
<feature type="strand" evidence="9">
    <location>
        <begin position="171"/>
        <end position="173"/>
    </location>
</feature>
<feature type="strand" evidence="10">
    <location>
        <begin position="180"/>
        <end position="189"/>
    </location>
</feature>
<feature type="strand" evidence="9">
    <location>
        <begin position="199"/>
        <end position="201"/>
    </location>
</feature>
<feature type="strand" evidence="10">
    <location>
        <begin position="212"/>
        <end position="216"/>
    </location>
</feature>
<feature type="helix" evidence="10">
    <location>
        <begin position="224"/>
        <end position="231"/>
    </location>
</feature>
<feature type="strand" evidence="10">
    <location>
        <begin position="235"/>
        <end position="242"/>
    </location>
</feature>
<feature type="turn" evidence="10">
    <location>
        <begin position="243"/>
        <end position="245"/>
    </location>
</feature>
<feature type="helix" evidence="10">
    <location>
        <begin position="251"/>
        <end position="262"/>
    </location>
</feature>
<feature type="strand" evidence="10">
    <location>
        <begin position="266"/>
        <end position="275"/>
    </location>
</feature>
<feature type="turn" evidence="10">
    <location>
        <begin position="281"/>
        <end position="283"/>
    </location>
</feature>
<feature type="helix" evidence="10">
    <location>
        <begin position="288"/>
        <end position="291"/>
    </location>
</feature>
<feature type="helix" evidence="10">
    <location>
        <begin position="302"/>
        <end position="313"/>
    </location>
</feature>
<feature type="turn" evidence="10">
    <location>
        <begin position="314"/>
        <end position="316"/>
    </location>
</feature>
<feature type="helix" evidence="10">
    <location>
        <begin position="319"/>
        <end position="326"/>
    </location>
</feature>
<feature type="strand" evidence="10">
    <location>
        <begin position="330"/>
        <end position="334"/>
    </location>
</feature>
<gene>
    <name type="primary">ansA</name>
    <name type="ordered locus">b1767</name>
    <name type="ordered locus">JW1756</name>
</gene>
<accession>P0A962</accession>
<accession>P18840</accession>
<reference key="1">
    <citation type="journal article" date="1989" name="Gene">
        <title>Structure and expression in Escherichia coli K-12 of the L-asparaginase I-encoding ansA gene and its flanking regions.</title>
        <authorList>
            <person name="Jerlstroem P.G."/>
            <person name="Bezjak D.A."/>
            <person name="Jennings M.P."/>
            <person name="Beacham I.R."/>
        </authorList>
    </citation>
    <scope>NUCLEOTIDE SEQUENCE [GENOMIC DNA]</scope>
    <source>
        <strain>K12</strain>
    </source>
</reference>
<reference key="2">
    <citation type="journal article" date="1996" name="DNA Res.">
        <title>A 570-kb DNA sequence of the Escherichia coli K-12 genome corresponding to the 28.0-40.1 min region on the linkage map.</title>
        <authorList>
            <person name="Aiba H."/>
            <person name="Baba T."/>
            <person name="Fujita K."/>
            <person name="Hayashi K."/>
            <person name="Inada T."/>
            <person name="Isono K."/>
            <person name="Itoh T."/>
            <person name="Kasai H."/>
            <person name="Kashimoto K."/>
            <person name="Kimura S."/>
            <person name="Kitakawa M."/>
            <person name="Kitagawa M."/>
            <person name="Makino K."/>
            <person name="Miki T."/>
            <person name="Mizobuchi K."/>
            <person name="Mori H."/>
            <person name="Mori T."/>
            <person name="Motomura K."/>
            <person name="Nakade S."/>
            <person name="Nakamura Y."/>
            <person name="Nashimoto H."/>
            <person name="Nishio Y."/>
            <person name="Oshima T."/>
            <person name="Saito N."/>
            <person name="Sampei G."/>
            <person name="Seki Y."/>
            <person name="Sivasundaram S."/>
            <person name="Tagami H."/>
            <person name="Takeda J."/>
            <person name="Takemoto K."/>
            <person name="Takeuchi Y."/>
            <person name="Wada C."/>
            <person name="Yamamoto Y."/>
            <person name="Horiuchi T."/>
        </authorList>
    </citation>
    <scope>NUCLEOTIDE SEQUENCE [LARGE SCALE GENOMIC DNA]</scope>
    <source>
        <strain>K12 / W3110 / ATCC 27325 / DSM 5911</strain>
    </source>
</reference>
<reference key="3">
    <citation type="journal article" date="1997" name="Science">
        <title>The complete genome sequence of Escherichia coli K-12.</title>
        <authorList>
            <person name="Blattner F.R."/>
            <person name="Plunkett G. III"/>
            <person name="Bloch C.A."/>
            <person name="Perna N.T."/>
            <person name="Burland V."/>
            <person name="Riley M."/>
            <person name="Collado-Vides J."/>
            <person name="Glasner J.D."/>
            <person name="Rode C.K."/>
            <person name="Mayhew G.F."/>
            <person name="Gregor J."/>
            <person name="Davis N.W."/>
            <person name="Kirkpatrick H.A."/>
            <person name="Goeden M.A."/>
            <person name="Rose D.J."/>
            <person name="Mau B."/>
            <person name="Shao Y."/>
        </authorList>
    </citation>
    <scope>NUCLEOTIDE SEQUENCE [LARGE SCALE GENOMIC DNA]</scope>
    <source>
        <strain>K12 / MG1655 / ATCC 47076</strain>
    </source>
</reference>
<reference key="4">
    <citation type="journal article" date="2006" name="Mol. Syst. Biol.">
        <title>Highly accurate genome sequences of Escherichia coli K-12 strains MG1655 and W3110.</title>
        <authorList>
            <person name="Hayashi K."/>
            <person name="Morooka N."/>
            <person name="Yamamoto Y."/>
            <person name="Fujita K."/>
            <person name="Isono K."/>
            <person name="Choi S."/>
            <person name="Ohtsubo E."/>
            <person name="Baba T."/>
            <person name="Wanner B.L."/>
            <person name="Mori H."/>
            <person name="Horiuchi T."/>
        </authorList>
    </citation>
    <scope>NUCLEOTIDE SEQUENCE [LARGE SCALE GENOMIC DNA]</scope>
    <source>
        <strain>K12 / W3110 / ATCC 27325 / DSM 5911</strain>
    </source>
</reference>
<reference evidence="6 7 8" key="5">
    <citation type="journal article" date="2007" name="J. Mol. Biol.">
        <title>Crystal structure and allosteric regulation of the cytoplasmic Escherichia coli L-asparaginase I.</title>
        <authorList>
            <person name="Yun M.K."/>
            <person name="Nourse A."/>
            <person name="White S.W."/>
            <person name="Rock C.O."/>
            <person name="Heath R.J."/>
        </authorList>
    </citation>
    <scope>X-RAY CRYSTALLOGRAPHY (1.82 ANGSTROMS) IN COMPLEX WITH ASPARAGINE</scope>
    <scope>ACTIVE SITE</scope>
    <scope>CATALYTIC ACTIVITY</scope>
    <scope>SUBUNIT</scope>
    <scope>ACTIVITY REGULATION</scope>
    <scope>MUTAGENESIS OF THR-14; THR-91; GLN-118; THR-162 AND ARG-240</scope>
</reference>
<proteinExistence type="evidence at protein level"/>